<feature type="chain" id="PRO_0000308520" description="MOG interacting and ectopic P-granules protein 1">
    <location>
        <begin position="1"/>
        <end position="880"/>
    </location>
</feature>
<feature type="zinc finger region" description="C2H2-type 1">
    <location>
        <begin position="436"/>
        <end position="459"/>
    </location>
</feature>
<feature type="zinc finger region" description="C2H2-type 2">
    <location>
        <begin position="465"/>
        <end position="488"/>
    </location>
</feature>
<feature type="zinc finger region" description="CCHC-type">
    <location>
        <begin position="501"/>
        <end position="523"/>
    </location>
</feature>
<feature type="zinc finger region" description="C2H2-type 3">
    <location>
        <begin position="728"/>
        <end position="751"/>
    </location>
</feature>
<feature type="zinc finger region" description="C2H2-type 4">
    <location>
        <begin position="768"/>
        <end position="791"/>
    </location>
</feature>
<feature type="zinc finger region" description="C2H2-type 5">
    <location>
        <begin position="809"/>
        <end position="830"/>
    </location>
</feature>
<feature type="zinc finger region" description="C2H2-type 6">
    <location>
        <begin position="841"/>
        <end position="864"/>
    </location>
</feature>
<feature type="region of interest" description="Disordered" evidence="3">
    <location>
        <begin position="1"/>
        <end position="37"/>
    </location>
</feature>
<feature type="region of interest" description="Disordered" evidence="3">
    <location>
        <begin position="82"/>
        <end position="257"/>
    </location>
</feature>
<feature type="region of interest" description="Disordered" evidence="3">
    <location>
        <begin position="350"/>
        <end position="370"/>
    </location>
</feature>
<feature type="compositionally biased region" description="Polar residues" evidence="3">
    <location>
        <begin position="1"/>
        <end position="20"/>
    </location>
</feature>
<feature type="compositionally biased region" description="Basic and acidic residues" evidence="3">
    <location>
        <begin position="23"/>
        <end position="37"/>
    </location>
</feature>
<feature type="compositionally biased region" description="Polar residues" evidence="3">
    <location>
        <begin position="87"/>
        <end position="105"/>
    </location>
</feature>
<feature type="compositionally biased region" description="Acidic residues" evidence="3">
    <location>
        <begin position="108"/>
        <end position="120"/>
    </location>
</feature>
<feature type="compositionally biased region" description="Basic and acidic residues" evidence="3">
    <location>
        <begin position="154"/>
        <end position="170"/>
    </location>
</feature>
<feature type="compositionally biased region" description="Basic and acidic residues" evidence="3">
    <location>
        <begin position="183"/>
        <end position="193"/>
    </location>
</feature>
<feature type="compositionally biased region" description="Acidic residues" evidence="3">
    <location>
        <begin position="215"/>
        <end position="224"/>
    </location>
</feature>
<feature type="compositionally biased region" description="Basic and acidic residues" evidence="3">
    <location>
        <begin position="235"/>
        <end position="252"/>
    </location>
</feature>
<feature type="compositionally biased region" description="Basic and acidic residues" evidence="3">
    <location>
        <begin position="350"/>
        <end position="364"/>
    </location>
</feature>
<organism>
    <name type="scientific">Caenorhabditis briggsae</name>
    <dbReference type="NCBI Taxonomy" id="6238"/>
    <lineage>
        <taxon>Eukaryota</taxon>
        <taxon>Metazoa</taxon>
        <taxon>Ecdysozoa</taxon>
        <taxon>Nematoda</taxon>
        <taxon>Chromadorea</taxon>
        <taxon>Rhabditida</taxon>
        <taxon>Rhabditina</taxon>
        <taxon>Rhabditomorpha</taxon>
        <taxon>Rhabditoidea</taxon>
        <taxon>Rhabditidae</taxon>
        <taxon>Peloderinae</taxon>
        <taxon>Caenorhabditis</taxon>
    </lineage>
</organism>
<evidence type="ECO:0000250" key="1"/>
<evidence type="ECO:0000250" key="2">
    <source>
        <dbReference type="UniProtKB" id="Q21502"/>
    </source>
</evidence>
<evidence type="ECO:0000256" key="3">
    <source>
        <dbReference type="SAM" id="MobiDB-lite"/>
    </source>
</evidence>
<comment type="function">
    <text evidence="1">Has a broad role in development, specifically in the genetic pathway SynMuvB that negatively regulates specification of the vulval cell fate. Required for fem-3 3'-UTR-mediated repression in the regulation of the sperm/oocyte switch. Acts by regulating the translation of fem-3 mRNA, by binding to its 3'-UTR (By similarity).</text>
</comment>
<comment type="subunit">
    <text evidence="2">Interacts with hda-1, let-418, lin-1, mog-1, mog-4, mog-5, mog-6, pie-1 and unc-98.</text>
</comment>
<comment type="subcellular location">
    <subcellularLocation>
        <location evidence="2">Nucleus</location>
    </subcellularLocation>
    <text evidence="2">Found in all nuclei in the germline, including oocytes, but not those of mature sperm and spermatocytes.</text>
</comment>
<protein>
    <recommendedName>
        <fullName>MOG interacting and ectopic P-granules protein 1</fullName>
    </recommendedName>
    <alternativeName>
        <fullName>Nuclear zinc finger protein</fullName>
    </alternativeName>
</protein>
<proteinExistence type="inferred from homology"/>
<dbReference type="EMBL" id="HE600986">
    <property type="protein sequence ID" value="CAP26250.2"/>
    <property type="molecule type" value="Genomic_DNA"/>
</dbReference>
<dbReference type="FunCoup" id="Q61SK8">
    <property type="interactions" value="576"/>
</dbReference>
<dbReference type="STRING" id="6238.Q61SK8"/>
<dbReference type="EnsemblMetazoa" id="CBG06138.1">
    <property type="protein sequence ID" value="CBG06138.1"/>
    <property type="gene ID" value="WBGene00028458"/>
</dbReference>
<dbReference type="WormBase" id="CBG06138">
    <property type="protein sequence ID" value="CBP28353"/>
    <property type="gene ID" value="WBGene00028458"/>
    <property type="gene designation" value="Cbr-mep-1"/>
</dbReference>
<dbReference type="eggNOG" id="ENOG502QQXF">
    <property type="taxonomic scope" value="Eukaryota"/>
</dbReference>
<dbReference type="HOGENOM" id="CLU_017465_0_0_1"/>
<dbReference type="InParanoid" id="Q61SK8"/>
<dbReference type="OMA" id="YSDIVHA"/>
<dbReference type="OrthoDB" id="6110130at2759"/>
<dbReference type="Proteomes" id="UP000008549">
    <property type="component" value="Unassembled WGS sequence"/>
</dbReference>
<dbReference type="GO" id="GO:0005634">
    <property type="term" value="C:nucleus"/>
    <property type="evidence" value="ECO:0000250"/>
    <property type="project" value="UniProtKB"/>
</dbReference>
<dbReference type="GO" id="GO:0017151">
    <property type="term" value="F:DEAD/H-box RNA helicase binding"/>
    <property type="evidence" value="ECO:0000250"/>
    <property type="project" value="UniProtKB"/>
</dbReference>
<dbReference type="GO" id="GO:0042826">
    <property type="term" value="F:histone deacetylase binding"/>
    <property type="evidence" value="ECO:0000250"/>
    <property type="project" value="UniProtKB"/>
</dbReference>
<dbReference type="GO" id="GO:0042802">
    <property type="term" value="F:identical protein binding"/>
    <property type="evidence" value="ECO:0007669"/>
    <property type="project" value="EnsemblMetazoa"/>
</dbReference>
<dbReference type="GO" id="GO:0003723">
    <property type="term" value="F:RNA binding"/>
    <property type="evidence" value="ECO:0007669"/>
    <property type="project" value="UniProtKB-KW"/>
</dbReference>
<dbReference type="GO" id="GO:0008270">
    <property type="term" value="F:zinc ion binding"/>
    <property type="evidence" value="ECO:0007669"/>
    <property type="project" value="UniProtKB-KW"/>
</dbReference>
<dbReference type="GO" id="GO:0007506">
    <property type="term" value="P:gonadal mesoderm development"/>
    <property type="evidence" value="ECO:0007669"/>
    <property type="project" value="UniProtKB-KW"/>
</dbReference>
<dbReference type="GO" id="GO:0002119">
    <property type="term" value="P:nematode larval development"/>
    <property type="evidence" value="ECO:0000250"/>
    <property type="project" value="UniProtKB"/>
</dbReference>
<dbReference type="GO" id="GO:0048599">
    <property type="term" value="P:oocyte development"/>
    <property type="evidence" value="ECO:0007669"/>
    <property type="project" value="EnsemblMetazoa"/>
</dbReference>
<dbReference type="GO" id="GO:0010628">
    <property type="term" value="P:positive regulation of gene expression"/>
    <property type="evidence" value="ECO:0007669"/>
    <property type="project" value="EnsemblMetazoa"/>
</dbReference>
<dbReference type="GO" id="GO:0045944">
    <property type="term" value="P:positive regulation of transcription by RNA polymerase II"/>
    <property type="evidence" value="ECO:0000318"/>
    <property type="project" value="GO_Central"/>
</dbReference>
<dbReference type="GO" id="GO:0040025">
    <property type="term" value="P:vulval development"/>
    <property type="evidence" value="ECO:0007669"/>
    <property type="project" value="EnsemblMetazoa"/>
</dbReference>
<dbReference type="FunFam" id="3.30.160.60:FF:001612">
    <property type="entry name" value="MEP-1, isoform A"/>
    <property type="match status" value="1"/>
</dbReference>
<dbReference type="Gene3D" id="3.30.160.60">
    <property type="entry name" value="Classic Zinc Finger"/>
    <property type="match status" value="1"/>
</dbReference>
<dbReference type="InterPro" id="IPR050331">
    <property type="entry name" value="Zinc_finger"/>
</dbReference>
<dbReference type="InterPro" id="IPR013087">
    <property type="entry name" value="Znf_C2H2_type"/>
</dbReference>
<dbReference type="PANTHER" id="PTHR16515:SF66">
    <property type="entry name" value="C2H2-TYPE DOMAIN-CONTAINING PROTEIN"/>
    <property type="match status" value="1"/>
</dbReference>
<dbReference type="PANTHER" id="PTHR16515">
    <property type="entry name" value="PR DOMAIN ZINC FINGER PROTEIN"/>
    <property type="match status" value="1"/>
</dbReference>
<dbReference type="SMART" id="SM00355">
    <property type="entry name" value="ZnF_C2H2"/>
    <property type="match status" value="7"/>
</dbReference>
<dbReference type="PROSITE" id="PS00028">
    <property type="entry name" value="ZINC_FINGER_C2H2_1"/>
    <property type="match status" value="3"/>
</dbReference>
<keyword id="KW-0217">Developmental protein</keyword>
<keyword id="KW-0221">Differentiation</keyword>
<keyword id="KW-0334">Gonadal differentiation</keyword>
<keyword id="KW-0479">Metal-binding</keyword>
<keyword id="KW-0539">Nucleus</keyword>
<keyword id="KW-1185">Reference proteome</keyword>
<keyword id="KW-0677">Repeat</keyword>
<keyword id="KW-0678">Repressor</keyword>
<keyword id="KW-0694">RNA-binding</keyword>
<keyword id="KW-0726">Sexual differentiation</keyword>
<keyword id="KW-0862">Zinc</keyword>
<keyword id="KW-0863">Zinc-finger</keyword>
<gene>
    <name evidence="2" type="primary">mep-1</name>
    <name type="ORF">CBG06138</name>
</gene>
<reference key="1">
    <citation type="journal article" date="2003" name="PLoS Biol.">
        <title>The genome sequence of Caenorhabditis briggsae: a platform for comparative genomics.</title>
        <authorList>
            <person name="Stein L.D."/>
            <person name="Bao Z."/>
            <person name="Blasiar D."/>
            <person name="Blumenthal T."/>
            <person name="Brent M.R."/>
            <person name="Chen N."/>
            <person name="Chinwalla A."/>
            <person name="Clarke L."/>
            <person name="Clee C."/>
            <person name="Coghlan A."/>
            <person name="Coulson A."/>
            <person name="D'Eustachio P."/>
            <person name="Fitch D.H.A."/>
            <person name="Fulton L.A."/>
            <person name="Fulton R.E."/>
            <person name="Griffiths-Jones S."/>
            <person name="Harris T.W."/>
            <person name="Hillier L.W."/>
            <person name="Kamath R."/>
            <person name="Kuwabara P.E."/>
            <person name="Mardis E.R."/>
            <person name="Marra M.A."/>
            <person name="Miner T.L."/>
            <person name="Minx P."/>
            <person name="Mullikin J.C."/>
            <person name="Plumb R.W."/>
            <person name="Rogers J."/>
            <person name="Schein J.E."/>
            <person name="Sohrmann M."/>
            <person name="Spieth J."/>
            <person name="Stajich J.E."/>
            <person name="Wei C."/>
            <person name="Willey D."/>
            <person name="Wilson R.K."/>
            <person name="Durbin R.M."/>
            <person name="Waterston R.H."/>
        </authorList>
    </citation>
    <scope>NUCLEOTIDE SEQUENCE [LARGE SCALE GENOMIC DNA]</scope>
    <source>
        <strain>AF16</strain>
    </source>
</reference>
<accession>Q61SK8</accession>
<accession>A8X0U0</accession>
<name>MEP1_CAEBR</name>
<sequence length="880" mass="99166">MVTSDETVLATTTNKTSITTEPMEPKSSDESTDSETDKIKILKAEQREALTEATGSVEVNGNEENGHVECATVDEVAHVEEDKVEEATNSVVDLSSNGSSATTSVPVEEQEEKANEDETNDVVMETSENGENGKEENGTAMEVAENPAVTENGSKSDGETETDRVAIKDSQEDDSEPVNGSVKPEEKEEKNDTDAPMEEEDQNGKGVKRPVECIQLDDDDDDIQEVSPPVPAKKQKTEETKQEPKQEAKAEPADDNEQAQIRLLDKLQEYVGDQRGQPCNKTRKVLDTLLGAINAQVQKEPLSVRKLILDKVLVLPNTISFPPSQVCDLLIEHDPEMPLAKVINRMFGEERPKLSDSEKRERQQMKQHNPVSHMTKLLVDIGQDLVQETTYCDIVHAKNLPEIPKNIETYKQVAAQLKPVWETLKRKNEPYKLKMSRCGVCGFQTESKLAMAAHKETLHFTGSKFQCTLCKETDTNEQRMKEHYFEAHLIIAKSEEKESKYPCAICEEDFNFKGVREQHYKQCKKDYIRIRNIMMPKQEDHLYLNRWLWERPPVDPSIIQQQQAAALQQAEQKKRHQQALLREQHAQAQAAQLLRKQQLQQQQQAQRLREQQAQAQYRQMAQLIQQQQQQQNRNNANNMSNSLIQAMQAQLRRSGTGTSPQNLNLLQKQMAAVLKNQNPAQIQALVASMNKQTQSPKTPTTPKVAKAAATPTLPLAMSASSSSPGVSFQCEICDQTVHEKDKYLSHLQVLHKQMVGKTLQDMTQGAPLACSRCRDRFWTYEGLERHLVMSHGLVTADLLLKAQKKEDGGRCKTCGKQYAFNMLQHLVADHQVKLCSAEIMYSCDVCAFKCSSYQTLEAHLSSTHPKSADKKKEELITLDD</sequence>